<protein>
    <recommendedName>
        <fullName evidence="1">Ribosome-binding factor A</fullName>
    </recommendedName>
</protein>
<dbReference type="EMBL" id="AE014133">
    <property type="protein sequence ID" value="AAN58176.1"/>
    <property type="molecule type" value="Genomic_DNA"/>
</dbReference>
<dbReference type="RefSeq" id="NP_720870.1">
    <property type="nucleotide sequence ID" value="NC_004350.2"/>
</dbReference>
<dbReference type="RefSeq" id="WP_002262599.1">
    <property type="nucleotide sequence ID" value="NC_004350.2"/>
</dbReference>
<dbReference type="SMR" id="Q8DVP8"/>
<dbReference type="STRING" id="210007.SMU_422"/>
<dbReference type="GeneID" id="93860000"/>
<dbReference type="KEGG" id="smu:SMU_422"/>
<dbReference type="PATRIC" id="fig|210007.7.peg.372"/>
<dbReference type="eggNOG" id="COG0858">
    <property type="taxonomic scope" value="Bacteria"/>
</dbReference>
<dbReference type="HOGENOM" id="CLU_089475_3_0_9"/>
<dbReference type="OrthoDB" id="307788at2"/>
<dbReference type="PhylomeDB" id="Q8DVP8"/>
<dbReference type="Proteomes" id="UP000002512">
    <property type="component" value="Chromosome"/>
</dbReference>
<dbReference type="GO" id="GO:0005829">
    <property type="term" value="C:cytosol"/>
    <property type="evidence" value="ECO:0007669"/>
    <property type="project" value="TreeGrafter"/>
</dbReference>
<dbReference type="GO" id="GO:0043024">
    <property type="term" value="F:ribosomal small subunit binding"/>
    <property type="evidence" value="ECO:0007669"/>
    <property type="project" value="TreeGrafter"/>
</dbReference>
<dbReference type="GO" id="GO:0030490">
    <property type="term" value="P:maturation of SSU-rRNA"/>
    <property type="evidence" value="ECO:0007669"/>
    <property type="project" value="UniProtKB-UniRule"/>
</dbReference>
<dbReference type="Gene3D" id="3.30.300.20">
    <property type="match status" value="1"/>
</dbReference>
<dbReference type="HAMAP" id="MF_00003">
    <property type="entry name" value="RbfA"/>
    <property type="match status" value="1"/>
</dbReference>
<dbReference type="InterPro" id="IPR015946">
    <property type="entry name" value="KH_dom-like_a/b"/>
</dbReference>
<dbReference type="InterPro" id="IPR000238">
    <property type="entry name" value="RbfA"/>
</dbReference>
<dbReference type="InterPro" id="IPR023799">
    <property type="entry name" value="RbfA_dom_sf"/>
</dbReference>
<dbReference type="InterPro" id="IPR020053">
    <property type="entry name" value="Ribosome-bd_factorA_CS"/>
</dbReference>
<dbReference type="NCBIfam" id="TIGR00082">
    <property type="entry name" value="rbfA"/>
    <property type="match status" value="1"/>
</dbReference>
<dbReference type="PANTHER" id="PTHR33515">
    <property type="entry name" value="RIBOSOME-BINDING FACTOR A, CHLOROPLASTIC-RELATED"/>
    <property type="match status" value="1"/>
</dbReference>
<dbReference type="PANTHER" id="PTHR33515:SF1">
    <property type="entry name" value="RIBOSOME-BINDING FACTOR A, CHLOROPLASTIC-RELATED"/>
    <property type="match status" value="1"/>
</dbReference>
<dbReference type="Pfam" id="PF02033">
    <property type="entry name" value="RBFA"/>
    <property type="match status" value="1"/>
</dbReference>
<dbReference type="SUPFAM" id="SSF89919">
    <property type="entry name" value="Ribosome-binding factor A, RbfA"/>
    <property type="match status" value="1"/>
</dbReference>
<dbReference type="PROSITE" id="PS01319">
    <property type="entry name" value="RBFA"/>
    <property type="match status" value="1"/>
</dbReference>
<gene>
    <name evidence="1" type="primary">rbfA</name>
    <name type="ordered locus">SMU_422</name>
</gene>
<sequence>MSNHRIERVGMEIKREVNEILQKKVRDPRVQGVTITDVQMSGDLSLAKVYYTIMSDLASDNQKVQIGLEKAKGTIKRELGKNLTMYKIPDLTFIKDESIEYGNKIDQMLRDLEKRN</sequence>
<comment type="function">
    <text evidence="1">One of several proteins that assist in the late maturation steps of the functional core of the 30S ribosomal subunit. Associates with free 30S ribosomal subunits (but not with 30S subunits that are part of 70S ribosomes or polysomes). Required for efficient processing of 16S rRNA. May interact with the 5'-terminal helix region of 16S rRNA.</text>
</comment>
<comment type="subunit">
    <text evidence="1">Monomer. Binds 30S ribosomal subunits, but not 50S ribosomal subunits or 70S ribosomes.</text>
</comment>
<comment type="subcellular location">
    <subcellularLocation>
        <location evidence="1">Cytoplasm</location>
    </subcellularLocation>
</comment>
<comment type="similarity">
    <text evidence="1">Belongs to the RbfA family.</text>
</comment>
<proteinExistence type="inferred from homology"/>
<feature type="chain" id="PRO_0000102744" description="Ribosome-binding factor A">
    <location>
        <begin position="1"/>
        <end position="116"/>
    </location>
</feature>
<accession>Q8DVP8</accession>
<name>RBFA_STRMU</name>
<evidence type="ECO:0000255" key="1">
    <source>
        <dbReference type="HAMAP-Rule" id="MF_00003"/>
    </source>
</evidence>
<reference key="1">
    <citation type="journal article" date="2002" name="Proc. Natl. Acad. Sci. U.S.A.">
        <title>Genome sequence of Streptococcus mutans UA159, a cariogenic dental pathogen.</title>
        <authorList>
            <person name="Ajdic D.J."/>
            <person name="McShan W.M."/>
            <person name="McLaughlin R.E."/>
            <person name="Savic G."/>
            <person name="Chang J."/>
            <person name="Carson M.B."/>
            <person name="Primeaux C."/>
            <person name="Tian R."/>
            <person name="Kenton S."/>
            <person name="Jia H.G."/>
            <person name="Lin S.P."/>
            <person name="Qian Y."/>
            <person name="Li S."/>
            <person name="Zhu H."/>
            <person name="Najar F.Z."/>
            <person name="Lai H."/>
            <person name="White J."/>
            <person name="Roe B.A."/>
            <person name="Ferretti J.J."/>
        </authorList>
    </citation>
    <scope>NUCLEOTIDE SEQUENCE [LARGE SCALE GENOMIC DNA]</scope>
    <source>
        <strain>ATCC 700610 / UA159</strain>
    </source>
</reference>
<keyword id="KW-0963">Cytoplasm</keyword>
<keyword id="KW-1185">Reference proteome</keyword>
<keyword id="KW-0690">Ribosome biogenesis</keyword>
<organism>
    <name type="scientific">Streptococcus mutans serotype c (strain ATCC 700610 / UA159)</name>
    <dbReference type="NCBI Taxonomy" id="210007"/>
    <lineage>
        <taxon>Bacteria</taxon>
        <taxon>Bacillati</taxon>
        <taxon>Bacillota</taxon>
        <taxon>Bacilli</taxon>
        <taxon>Lactobacillales</taxon>
        <taxon>Streptococcaceae</taxon>
        <taxon>Streptococcus</taxon>
    </lineage>
</organism>